<feature type="chain" id="PRO_0000048132" description="Tubulin alpha chain">
    <location>
        <begin position="1"/>
        <end position="418" status="greater than"/>
    </location>
</feature>
<feature type="active site" evidence="1">
    <location>
        <position position="255"/>
    </location>
</feature>
<feature type="binding site" evidence="1">
    <location>
        <position position="11"/>
    </location>
    <ligand>
        <name>GTP</name>
        <dbReference type="ChEBI" id="CHEBI:37565"/>
    </ligand>
</feature>
<feature type="binding site" evidence="1">
    <location>
        <position position="71"/>
    </location>
    <ligand>
        <name>GTP</name>
        <dbReference type="ChEBI" id="CHEBI:37565"/>
    </ligand>
</feature>
<feature type="binding site" evidence="1">
    <location>
        <position position="71"/>
    </location>
    <ligand>
        <name>Mg(2+)</name>
        <dbReference type="ChEBI" id="CHEBI:18420"/>
    </ligand>
</feature>
<feature type="binding site" evidence="1">
    <location>
        <position position="140"/>
    </location>
    <ligand>
        <name>GTP</name>
        <dbReference type="ChEBI" id="CHEBI:37565"/>
    </ligand>
</feature>
<feature type="binding site" evidence="1">
    <location>
        <position position="144"/>
    </location>
    <ligand>
        <name>GTP</name>
        <dbReference type="ChEBI" id="CHEBI:37565"/>
    </ligand>
</feature>
<feature type="binding site" evidence="1">
    <location>
        <position position="179"/>
    </location>
    <ligand>
        <name>GTP</name>
        <dbReference type="ChEBI" id="CHEBI:37565"/>
    </ligand>
</feature>
<feature type="binding site" evidence="1">
    <location>
        <position position="206"/>
    </location>
    <ligand>
        <name>GTP</name>
        <dbReference type="ChEBI" id="CHEBI:37565"/>
    </ligand>
</feature>
<feature type="binding site" evidence="1">
    <location>
        <position position="228"/>
    </location>
    <ligand>
        <name>GTP</name>
        <dbReference type="ChEBI" id="CHEBI:37565"/>
    </ligand>
</feature>
<feature type="non-terminal residue">
    <location>
        <position position="418"/>
    </location>
</feature>
<protein>
    <recommendedName>
        <fullName>Tubulin alpha chain</fullName>
        <ecNumber evidence="1">3.6.5.-</ecNumber>
    </recommendedName>
</protein>
<dbReference type="EC" id="3.6.5.-" evidence="1"/>
<dbReference type="EMBL" id="M28358">
    <property type="protein sequence ID" value="AAA61688.1"/>
    <property type="molecule type" value="Genomic_DNA"/>
</dbReference>
<dbReference type="PIR" id="A45794">
    <property type="entry name" value="A45794"/>
</dbReference>
<dbReference type="SMR" id="P53371"/>
<dbReference type="GO" id="GO:0005737">
    <property type="term" value="C:cytoplasm"/>
    <property type="evidence" value="ECO:0007669"/>
    <property type="project" value="UniProtKB-KW"/>
</dbReference>
<dbReference type="GO" id="GO:0005874">
    <property type="term" value="C:microtubule"/>
    <property type="evidence" value="ECO:0007669"/>
    <property type="project" value="UniProtKB-KW"/>
</dbReference>
<dbReference type="GO" id="GO:0005525">
    <property type="term" value="F:GTP binding"/>
    <property type="evidence" value="ECO:0007669"/>
    <property type="project" value="UniProtKB-KW"/>
</dbReference>
<dbReference type="GO" id="GO:0016787">
    <property type="term" value="F:hydrolase activity"/>
    <property type="evidence" value="ECO:0007669"/>
    <property type="project" value="UniProtKB-KW"/>
</dbReference>
<dbReference type="GO" id="GO:0046872">
    <property type="term" value="F:metal ion binding"/>
    <property type="evidence" value="ECO:0007669"/>
    <property type="project" value="UniProtKB-KW"/>
</dbReference>
<dbReference type="GO" id="GO:0005200">
    <property type="term" value="F:structural constituent of cytoskeleton"/>
    <property type="evidence" value="ECO:0007669"/>
    <property type="project" value="InterPro"/>
</dbReference>
<dbReference type="GO" id="GO:0007017">
    <property type="term" value="P:microtubule-based process"/>
    <property type="evidence" value="ECO:0007669"/>
    <property type="project" value="InterPro"/>
</dbReference>
<dbReference type="CDD" id="cd02186">
    <property type="entry name" value="alpha_tubulin"/>
    <property type="match status" value="1"/>
</dbReference>
<dbReference type="FunFam" id="3.30.1330.20:FF:000001">
    <property type="entry name" value="Tubulin alpha chain"/>
    <property type="match status" value="1"/>
</dbReference>
<dbReference type="FunFam" id="3.40.50.1440:FF:000008">
    <property type="entry name" value="Tubulin alpha chain"/>
    <property type="match status" value="1"/>
</dbReference>
<dbReference type="Gene3D" id="1.10.287.600">
    <property type="entry name" value="Helix hairpin bin"/>
    <property type="match status" value="1"/>
</dbReference>
<dbReference type="Gene3D" id="3.30.1330.20">
    <property type="entry name" value="Tubulin/FtsZ, C-terminal domain"/>
    <property type="match status" value="1"/>
</dbReference>
<dbReference type="Gene3D" id="3.40.50.1440">
    <property type="entry name" value="Tubulin/FtsZ, GTPase domain"/>
    <property type="match status" value="1"/>
</dbReference>
<dbReference type="InterPro" id="IPR002452">
    <property type="entry name" value="Alpha_tubulin"/>
</dbReference>
<dbReference type="InterPro" id="IPR008280">
    <property type="entry name" value="Tub_FtsZ_C"/>
</dbReference>
<dbReference type="InterPro" id="IPR000217">
    <property type="entry name" value="Tubulin"/>
</dbReference>
<dbReference type="InterPro" id="IPR037103">
    <property type="entry name" value="Tubulin/FtsZ-like_C"/>
</dbReference>
<dbReference type="InterPro" id="IPR018316">
    <property type="entry name" value="Tubulin/FtsZ_2-layer-sand-dom"/>
</dbReference>
<dbReference type="InterPro" id="IPR036525">
    <property type="entry name" value="Tubulin/FtsZ_GTPase_sf"/>
</dbReference>
<dbReference type="InterPro" id="IPR023123">
    <property type="entry name" value="Tubulin_C"/>
</dbReference>
<dbReference type="InterPro" id="IPR003008">
    <property type="entry name" value="Tubulin_FtsZ_GTPase"/>
</dbReference>
<dbReference type="PANTHER" id="PTHR11588">
    <property type="entry name" value="TUBULIN"/>
    <property type="match status" value="1"/>
</dbReference>
<dbReference type="Pfam" id="PF00091">
    <property type="entry name" value="Tubulin"/>
    <property type="match status" value="1"/>
</dbReference>
<dbReference type="Pfam" id="PF03953">
    <property type="entry name" value="Tubulin_C"/>
    <property type="match status" value="1"/>
</dbReference>
<dbReference type="PRINTS" id="PR01162">
    <property type="entry name" value="ALPHATUBULIN"/>
</dbReference>
<dbReference type="PRINTS" id="PR01161">
    <property type="entry name" value="TUBULIN"/>
</dbReference>
<dbReference type="SMART" id="SM00864">
    <property type="entry name" value="Tubulin"/>
    <property type="match status" value="1"/>
</dbReference>
<dbReference type="SMART" id="SM00865">
    <property type="entry name" value="Tubulin_C"/>
    <property type="match status" value="1"/>
</dbReference>
<dbReference type="SUPFAM" id="SSF55307">
    <property type="entry name" value="Tubulin C-terminal domain-like"/>
    <property type="match status" value="1"/>
</dbReference>
<dbReference type="SUPFAM" id="SSF52490">
    <property type="entry name" value="Tubulin nucleotide-binding domain-like"/>
    <property type="match status" value="1"/>
</dbReference>
<reference key="1">
    <citation type="journal article" date="1989" name="J. Gen. Microbiol.">
        <title>Characterization of alpha and beta tubulin genes in the dimorphic fungus Histoplasma capsulatum.</title>
        <authorList>
            <person name="Harris G.S."/>
            <person name="Keath E.J."/>
            <person name="Medoff J."/>
        </authorList>
    </citation>
    <scope>NUCLEOTIDE SEQUENCE [GENOMIC DNA]</scope>
    <source>
        <strain>ATCC 26032 / G217B</strain>
    </source>
</reference>
<keyword id="KW-0963">Cytoplasm</keyword>
<keyword id="KW-0206">Cytoskeleton</keyword>
<keyword id="KW-0342">GTP-binding</keyword>
<keyword id="KW-0378">Hydrolase</keyword>
<keyword id="KW-0460">Magnesium</keyword>
<keyword id="KW-0479">Metal-binding</keyword>
<keyword id="KW-0493">Microtubule</keyword>
<keyword id="KW-0547">Nucleotide-binding</keyword>
<name>TBA_AJECA</name>
<evidence type="ECO:0000250" key="1">
    <source>
        <dbReference type="UniProtKB" id="P68363"/>
    </source>
</evidence>
<evidence type="ECO:0000305" key="2"/>
<sequence>MREVVSLNVGQAGGQIANSCWELYCLEHGIQPDGYLTEERKAADPDQGFNTFFSETGQGKYVPRTIYCDLEPNVVDEVRTGPYRALFHPEQMITGKEDASNNYARGHYTVGKEMIDQCLDKVRRVADNCSGLQGFLVFHSFGGGQGSGFGALLMERLSVDYGKKTKLEFCVYPAPQNATSVVEPYNSILTTHTTLEHSDVQFMVDNEAIYDICRRNLGIERPSYENSNRLMAQGQSPITAIMLLFDCALNVDLNEFQTNLVPYPRIHFPLASYSPVVSAGKASHESNSVMEVTIVCFEPNNQMVKCDPRNGKYMATCLLYRGDVVPKDVHAVAATLKTKRTVQFVDLQPTGFKIGICYQPPTMVPNGDLAKVNRACMLSNTTAISEAWTALSHKFDLIYSKRAFVHWYVGEGMEEGEF</sequence>
<comment type="function">
    <text>Tubulin is the major constituent of microtubules, a cylinder consisting of laterally associated linear protofilaments composed of alpha- and beta-tubulin heterodimers. Microtubules grow by the addition of GTP-tubulin dimers to the microtubule end, where a stabilizing cap forms. Below the cap, tubulin dimers are in GDP-bound state, owing to GTPase activity of alpha-tubulin.</text>
</comment>
<comment type="catalytic activity">
    <reaction evidence="1">
        <text>GTP + H2O = GDP + phosphate + H(+)</text>
        <dbReference type="Rhea" id="RHEA:19669"/>
        <dbReference type="ChEBI" id="CHEBI:15377"/>
        <dbReference type="ChEBI" id="CHEBI:15378"/>
        <dbReference type="ChEBI" id="CHEBI:37565"/>
        <dbReference type="ChEBI" id="CHEBI:43474"/>
        <dbReference type="ChEBI" id="CHEBI:58189"/>
    </reaction>
    <physiologicalReaction direction="left-to-right" evidence="1">
        <dbReference type="Rhea" id="RHEA:19670"/>
    </physiologicalReaction>
</comment>
<comment type="cofactor">
    <cofactor evidence="1">
        <name>Mg(2+)</name>
        <dbReference type="ChEBI" id="CHEBI:18420"/>
    </cofactor>
</comment>
<comment type="subunit">
    <text>Dimer of alpha and beta chains. A typical microtubule is a hollow water-filled tube with an outer diameter of 25 nm and an inner diameter of 15 nM. Alpha-beta heterodimers associate head-to-tail to form protofilaments running lengthwise along the microtubule wall with the beta-tubulin subunit facing the microtubule plus end conferring a structural polarity. Microtubules usually have 13 protofilaments but different protofilament numbers can be found in some organisms and specialized cells.</text>
</comment>
<comment type="subcellular location">
    <subcellularLocation>
        <location>Cytoplasm</location>
        <location>Cytoskeleton</location>
    </subcellularLocation>
</comment>
<comment type="similarity">
    <text evidence="2">Belongs to the tubulin family.</text>
</comment>
<gene>
    <name type="primary">TUB1</name>
</gene>
<accession>P53371</accession>
<proteinExistence type="inferred from homology"/>
<organism>
    <name type="scientific">Ajellomyces capsulatus</name>
    <name type="common">Darling's disease fungus</name>
    <name type="synonym">Histoplasma capsulatum</name>
    <dbReference type="NCBI Taxonomy" id="5037"/>
    <lineage>
        <taxon>Eukaryota</taxon>
        <taxon>Fungi</taxon>
        <taxon>Dikarya</taxon>
        <taxon>Ascomycota</taxon>
        <taxon>Pezizomycotina</taxon>
        <taxon>Eurotiomycetes</taxon>
        <taxon>Eurotiomycetidae</taxon>
        <taxon>Onygenales</taxon>
        <taxon>Ajellomycetaceae</taxon>
        <taxon>Histoplasma</taxon>
    </lineage>
</organism>